<gene>
    <name type="ordered locus">GSU0233</name>
</gene>
<feature type="chain" id="PRO_0000309391" description="UPF0502 protein GSU0233">
    <location>
        <begin position="1"/>
        <end position="219"/>
    </location>
</feature>
<sequence>MEILLNDVEVRVLGCLIEKELATPEYYPLTLNSLTTACNQKSNRDPVMALEESEVVRALDGLKMKHVAIQAADSGRVPRYRHILSERLRFSPAELAILAELLLRGPQTLGELRTRAERMHPFADLAAVEQVLGELAERTPPLVMRLPRQPGRKESRFAHLLAGEPDLSAEERTAPPEGARLQVMAENERIAALELEVATLRAEVGELRQVMEEFRSQFE</sequence>
<name>Y233_GEOSL</name>
<protein>
    <recommendedName>
        <fullName evidence="1">UPF0502 protein GSU0233</fullName>
    </recommendedName>
</protein>
<dbReference type="EMBL" id="AE017180">
    <property type="protein sequence ID" value="AAR33567.1"/>
    <property type="molecule type" value="Genomic_DNA"/>
</dbReference>
<dbReference type="RefSeq" id="NP_951294.1">
    <property type="nucleotide sequence ID" value="NC_002939.5"/>
</dbReference>
<dbReference type="RefSeq" id="WP_010940907.1">
    <property type="nucleotide sequence ID" value="NC_002939.5"/>
</dbReference>
<dbReference type="SMR" id="Q74GL3"/>
<dbReference type="FunCoup" id="Q74GL3">
    <property type="interactions" value="8"/>
</dbReference>
<dbReference type="STRING" id="243231.GSU0233"/>
<dbReference type="EnsemblBacteria" id="AAR33567">
    <property type="protein sequence ID" value="AAR33567"/>
    <property type="gene ID" value="GSU0233"/>
</dbReference>
<dbReference type="KEGG" id="gsu:GSU0233"/>
<dbReference type="PATRIC" id="fig|243231.5.peg.232"/>
<dbReference type="eggNOG" id="COG3132">
    <property type="taxonomic scope" value="Bacteria"/>
</dbReference>
<dbReference type="HOGENOM" id="CLU_057831_1_0_7"/>
<dbReference type="InParanoid" id="Q74GL3"/>
<dbReference type="OrthoDB" id="9784785at2"/>
<dbReference type="Proteomes" id="UP000000577">
    <property type="component" value="Chromosome"/>
</dbReference>
<dbReference type="Gene3D" id="1.10.10.10">
    <property type="entry name" value="Winged helix-like DNA-binding domain superfamily/Winged helix DNA-binding domain"/>
    <property type="match status" value="2"/>
</dbReference>
<dbReference type="HAMAP" id="MF_01584">
    <property type="entry name" value="UPF0502"/>
    <property type="match status" value="1"/>
</dbReference>
<dbReference type="InterPro" id="IPR007432">
    <property type="entry name" value="DUF480"/>
</dbReference>
<dbReference type="InterPro" id="IPR036388">
    <property type="entry name" value="WH-like_DNA-bd_sf"/>
</dbReference>
<dbReference type="InterPro" id="IPR036390">
    <property type="entry name" value="WH_DNA-bd_sf"/>
</dbReference>
<dbReference type="PANTHER" id="PTHR38768">
    <property type="entry name" value="UPF0502 PROTEIN YCEH"/>
    <property type="match status" value="1"/>
</dbReference>
<dbReference type="PANTHER" id="PTHR38768:SF1">
    <property type="entry name" value="UPF0502 PROTEIN YCEH"/>
    <property type="match status" value="1"/>
</dbReference>
<dbReference type="Pfam" id="PF04337">
    <property type="entry name" value="DUF480"/>
    <property type="match status" value="1"/>
</dbReference>
<dbReference type="SUPFAM" id="SSF46785">
    <property type="entry name" value="Winged helix' DNA-binding domain"/>
    <property type="match status" value="2"/>
</dbReference>
<proteinExistence type="inferred from homology"/>
<reference key="1">
    <citation type="journal article" date="2003" name="Science">
        <title>Genome of Geobacter sulfurreducens: metal reduction in subsurface environments.</title>
        <authorList>
            <person name="Methe B.A."/>
            <person name="Nelson K.E."/>
            <person name="Eisen J.A."/>
            <person name="Paulsen I.T."/>
            <person name="Nelson W.C."/>
            <person name="Heidelberg J.F."/>
            <person name="Wu D."/>
            <person name="Wu M."/>
            <person name="Ward N.L."/>
            <person name="Beanan M.J."/>
            <person name="Dodson R.J."/>
            <person name="Madupu R."/>
            <person name="Brinkac L.M."/>
            <person name="Daugherty S.C."/>
            <person name="DeBoy R.T."/>
            <person name="Durkin A.S."/>
            <person name="Gwinn M.L."/>
            <person name="Kolonay J.F."/>
            <person name="Sullivan S.A."/>
            <person name="Haft D.H."/>
            <person name="Selengut J."/>
            <person name="Davidsen T.M."/>
            <person name="Zafar N."/>
            <person name="White O."/>
            <person name="Tran B."/>
            <person name="Romero C."/>
            <person name="Forberger H.A."/>
            <person name="Weidman J.F."/>
            <person name="Khouri H.M."/>
            <person name="Feldblyum T.V."/>
            <person name="Utterback T.R."/>
            <person name="Van Aken S.E."/>
            <person name="Lovley D.R."/>
            <person name="Fraser C.M."/>
        </authorList>
    </citation>
    <scope>NUCLEOTIDE SEQUENCE [LARGE SCALE GENOMIC DNA]</scope>
    <source>
        <strain>ATCC 51573 / DSM 12127 / PCA</strain>
    </source>
</reference>
<keyword id="KW-1185">Reference proteome</keyword>
<evidence type="ECO:0000255" key="1">
    <source>
        <dbReference type="HAMAP-Rule" id="MF_01584"/>
    </source>
</evidence>
<organism>
    <name type="scientific">Geobacter sulfurreducens (strain ATCC 51573 / DSM 12127 / PCA)</name>
    <dbReference type="NCBI Taxonomy" id="243231"/>
    <lineage>
        <taxon>Bacteria</taxon>
        <taxon>Pseudomonadati</taxon>
        <taxon>Thermodesulfobacteriota</taxon>
        <taxon>Desulfuromonadia</taxon>
        <taxon>Geobacterales</taxon>
        <taxon>Geobacteraceae</taxon>
        <taxon>Geobacter</taxon>
    </lineage>
</organism>
<accession>Q74GL3</accession>
<comment type="similarity">
    <text evidence="1">Belongs to the UPF0502 family.</text>
</comment>